<dbReference type="EMBL" id="AF520567">
    <property type="protein sequence ID" value="AAM75345.1"/>
    <property type="molecule type" value="mRNA"/>
</dbReference>
<dbReference type="EMBL" id="Z79600">
    <property type="protein sequence ID" value="CAB01878.2"/>
    <property type="molecule type" value="Genomic_DNA"/>
</dbReference>
<dbReference type="EMBL" id="Z79600">
    <property type="protein sequence ID" value="CAB01880.1"/>
    <property type="molecule type" value="Genomic_DNA"/>
</dbReference>
<dbReference type="PIR" id="T22992">
    <property type="entry name" value="T22992"/>
</dbReference>
<dbReference type="RefSeq" id="NP_001251397.1">
    <molecule id="Q93833-1"/>
    <property type="nucleotide sequence ID" value="NM_001264468.3"/>
</dbReference>
<dbReference type="RefSeq" id="NP_001251398.1">
    <molecule id="Q93833-2"/>
    <property type="nucleotide sequence ID" value="NM_001264469.3"/>
</dbReference>
<dbReference type="SMR" id="Q93833"/>
<dbReference type="BioGRID" id="51341">
    <property type="interactions" value="2"/>
</dbReference>
<dbReference type="ComplexPortal" id="CPX-1290">
    <property type="entry name" value="Intraflagellar transport complex B"/>
</dbReference>
<dbReference type="FunCoup" id="Q93833">
    <property type="interactions" value="833"/>
</dbReference>
<dbReference type="STRING" id="6239.F59C6.7a.1"/>
<dbReference type="PaxDb" id="6239-F59C6.7a"/>
<dbReference type="EnsemblMetazoa" id="F59C6.7a.1">
    <molecule id="Q93833-1"/>
    <property type="protein sequence ID" value="F59C6.7a.1"/>
    <property type="gene ID" value="WBGene00000492"/>
</dbReference>
<dbReference type="EnsemblMetazoa" id="F59C6.7b.1">
    <molecule id="Q93833-2"/>
    <property type="protein sequence ID" value="F59C6.7b.1"/>
    <property type="gene ID" value="WBGene00000492"/>
</dbReference>
<dbReference type="GeneID" id="186607"/>
<dbReference type="KEGG" id="cel:CELE_F59C6.7"/>
<dbReference type="UCSC" id="F59C6.7">
    <molecule id="Q93833-1"/>
    <property type="organism name" value="c. elegans"/>
</dbReference>
<dbReference type="AGR" id="WB:WBGene00000492"/>
<dbReference type="CTD" id="186607"/>
<dbReference type="WormBase" id="F59C6.7a">
    <molecule id="Q93833-1"/>
    <property type="protein sequence ID" value="CE31704"/>
    <property type="gene ID" value="WBGene00000492"/>
    <property type="gene designation" value="che-13"/>
</dbReference>
<dbReference type="WormBase" id="F59C6.7b">
    <molecule id="Q93833-2"/>
    <property type="protein sequence ID" value="CE11472"/>
    <property type="gene ID" value="WBGene00000492"/>
    <property type="gene designation" value="che-13"/>
</dbReference>
<dbReference type="eggNOG" id="KOG0972">
    <property type="taxonomic scope" value="Eukaryota"/>
</dbReference>
<dbReference type="GeneTree" id="ENSGT00390000006307"/>
<dbReference type="HOGENOM" id="CLU_039132_0_0_1"/>
<dbReference type="InParanoid" id="Q93833"/>
<dbReference type="OMA" id="VHAHDQD"/>
<dbReference type="OrthoDB" id="423881at2759"/>
<dbReference type="PhylomeDB" id="Q93833"/>
<dbReference type="Reactome" id="R-CEL-5620924">
    <property type="pathway name" value="Intraflagellar transport"/>
</dbReference>
<dbReference type="PRO" id="PR:Q93833"/>
<dbReference type="Proteomes" id="UP000001940">
    <property type="component" value="Chromosome I"/>
</dbReference>
<dbReference type="Bgee" id="WBGene00000492">
    <property type="expression patterns" value="Expressed in pharyngeal muscle cell (C elegans) and 3 other cell types or tissues"/>
</dbReference>
<dbReference type="GO" id="GO:0005930">
    <property type="term" value="C:axoneme"/>
    <property type="evidence" value="ECO:0000314"/>
    <property type="project" value="WormBase"/>
</dbReference>
<dbReference type="GO" id="GO:0036064">
    <property type="term" value="C:ciliary basal body"/>
    <property type="evidence" value="ECO:0000314"/>
    <property type="project" value="MGI"/>
</dbReference>
<dbReference type="GO" id="GO:0035869">
    <property type="term" value="C:ciliary transition zone"/>
    <property type="evidence" value="ECO:0000314"/>
    <property type="project" value="WormBase"/>
</dbReference>
<dbReference type="GO" id="GO:0005929">
    <property type="term" value="C:cilium"/>
    <property type="evidence" value="ECO:0000318"/>
    <property type="project" value="GO_Central"/>
</dbReference>
<dbReference type="GO" id="GO:0005794">
    <property type="term" value="C:Golgi apparatus"/>
    <property type="evidence" value="ECO:0000318"/>
    <property type="project" value="GO_Central"/>
</dbReference>
<dbReference type="GO" id="GO:0030992">
    <property type="term" value="C:intraciliary transport particle B"/>
    <property type="evidence" value="ECO:0000314"/>
    <property type="project" value="WormBase"/>
</dbReference>
<dbReference type="GO" id="GO:0005815">
    <property type="term" value="C:microtubule organizing center"/>
    <property type="evidence" value="ECO:0000318"/>
    <property type="project" value="GO_Central"/>
</dbReference>
<dbReference type="GO" id="GO:0007635">
    <property type="term" value="P:chemosensory behavior"/>
    <property type="evidence" value="ECO:0000315"/>
    <property type="project" value="WormBase"/>
</dbReference>
<dbReference type="GO" id="GO:0060271">
    <property type="term" value="P:cilium assembly"/>
    <property type="evidence" value="ECO:0000316"/>
    <property type="project" value="UniProtKB"/>
</dbReference>
<dbReference type="GO" id="GO:0035720">
    <property type="term" value="P:intraciliary anterograde transport"/>
    <property type="evidence" value="ECO:0000270"/>
    <property type="project" value="WormBase"/>
</dbReference>
<dbReference type="GO" id="GO:0035721">
    <property type="term" value="P:intraciliary retrograde transport"/>
    <property type="evidence" value="ECO:0000270"/>
    <property type="project" value="WormBase"/>
</dbReference>
<dbReference type="GO" id="GO:0042073">
    <property type="term" value="P:intraciliary transport"/>
    <property type="evidence" value="ECO:0000318"/>
    <property type="project" value="GO_Central"/>
</dbReference>
<dbReference type="GO" id="GO:1905515">
    <property type="term" value="P:non-motile cilium assembly"/>
    <property type="evidence" value="ECO:0000315"/>
    <property type="project" value="WormBase"/>
</dbReference>
<dbReference type="GO" id="GO:0008104">
    <property type="term" value="P:protein localization"/>
    <property type="evidence" value="ECO:0000315"/>
    <property type="project" value="WormBase"/>
</dbReference>
<dbReference type="InterPro" id="IPR019530">
    <property type="entry name" value="Intra-flagellar_transport_57"/>
</dbReference>
<dbReference type="PANTHER" id="PTHR16011">
    <property type="entry name" value="IFT57/HIPPI"/>
    <property type="match status" value="1"/>
</dbReference>
<dbReference type="PANTHER" id="PTHR16011:SF0">
    <property type="entry name" value="INTRAFLAGELLAR TRANSPORT PROTEIN 57 HOMOLOG"/>
    <property type="match status" value="1"/>
</dbReference>
<dbReference type="Pfam" id="PF10498">
    <property type="entry name" value="IFT57"/>
    <property type="match status" value="1"/>
</dbReference>
<reference key="1">
    <citation type="journal article" date="2003" name="Exp. Cell Res.">
        <title>Identification of CHE-13, a novel intraflagellar transport protein required for cilia formation.</title>
        <authorList>
            <person name="Haycraft C.J."/>
            <person name="Schafer J.C."/>
            <person name="Zhang Q."/>
            <person name="Taulman P.D."/>
            <person name="Yoder B.K."/>
        </authorList>
    </citation>
    <scope>NUCLEOTIDE SEQUENCE [MRNA] (ISOFORM A)</scope>
    <scope>FUNCTION</scope>
    <scope>SUBCELLULAR LOCATION</scope>
    <scope>INDUCTION</scope>
    <scope>DISRUPTION PHENOTYPE</scope>
</reference>
<reference key="2">
    <citation type="journal article" date="1998" name="Science">
        <title>Genome sequence of the nematode C. elegans: a platform for investigating biology.</title>
        <authorList>
            <consortium name="The C. elegans sequencing consortium"/>
        </authorList>
    </citation>
    <scope>NUCLEOTIDE SEQUENCE [LARGE SCALE GENOMIC DNA]</scope>
    <scope>ALTERNATIVE SPLICING</scope>
    <source>
        <strain>Bristol N2</strain>
    </source>
</reference>
<reference key="3">
    <citation type="journal article" date="1986" name="Dev. Biol.">
        <title>Mutant sensory cilia in the nematode Caenorhabditis elegans.</title>
        <authorList>
            <person name="Perkins L.A."/>
            <person name="Hedgecock E.M."/>
            <person name="Thomson J.N."/>
            <person name="Culotti J.G."/>
        </authorList>
    </citation>
    <scope>DISRUPTION PHENOTYPE</scope>
</reference>
<reference key="4">
    <citation type="journal article" date="2017" name="Curr. Biol.">
        <title>Dynein-driven retrograde intraflagellar transport is triphasic in C. elegans sensory cilia.</title>
        <authorList>
            <person name="Yi P."/>
            <person name="Li W.J."/>
            <person name="Dong M.Q."/>
            <person name="Ou G."/>
        </authorList>
    </citation>
    <scope>FUNCTION</scope>
    <scope>IDENTIFICATION IN IFT COMPLEX B</scope>
    <scope>IDENTIFICATION BY MASS SPECTROMETRY</scope>
</reference>
<gene>
    <name evidence="7" type="primary">che-13</name>
    <name evidence="7" type="ORF">F59C6.7</name>
</gene>
<organism>
    <name type="scientific">Caenorhabditis elegans</name>
    <dbReference type="NCBI Taxonomy" id="6239"/>
    <lineage>
        <taxon>Eukaryota</taxon>
        <taxon>Metazoa</taxon>
        <taxon>Ecdysozoa</taxon>
        <taxon>Nematoda</taxon>
        <taxon>Chromadorea</taxon>
        <taxon>Rhabditida</taxon>
        <taxon>Rhabditina</taxon>
        <taxon>Rhabditomorpha</taxon>
        <taxon>Rhabditoidea</taxon>
        <taxon>Rhabditidae</taxon>
        <taxon>Peloderinae</taxon>
        <taxon>Caenorhabditis</taxon>
    </lineage>
</organism>
<feature type="chain" id="PRO_0000328889" description="Intraflagellar transport protein che-13">
    <location>
        <begin position="1"/>
        <end position="412"/>
    </location>
</feature>
<feature type="region of interest" description="Disordered" evidence="2">
    <location>
        <begin position="1"/>
        <end position="21"/>
    </location>
</feature>
<feature type="region of interest" description="Disordered" evidence="2">
    <location>
        <begin position="162"/>
        <end position="193"/>
    </location>
</feature>
<feature type="coiled-coil region" evidence="1">
    <location>
        <begin position="302"/>
        <end position="393"/>
    </location>
</feature>
<feature type="compositionally biased region" description="Acidic residues" evidence="2">
    <location>
        <begin position="165"/>
        <end position="193"/>
    </location>
</feature>
<feature type="splice variant" id="VSP_043944" description="In isoform b." evidence="6">
    <location>
        <begin position="1"/>
        <end position="87"/>
    </location>
</feature>
<feature type="splice variant" id="VSP_043945" description="In isoform b." evidence="6">
    <original>IKKSGDESYNMPQEFDDPNSTLANIMAAAKNK</original>
    <variation>MLHHIKSLKSVLSRGQEGRFGEKRHSNTTFIT</variation>
    <location>
        <begin position="88"/>
        <end position="119"/>
    </location>
</feature>
<evidence type="ECO:0000255" key="1"/>
<evidence type="ECO:0000256" key="2">
    <source>
        <dbReference type="SAM" id="MobiDB-lite"/>
    </source>
</evidence>
<evidence type="ECO:0000269" key="3">
    <source>
    </source>
</evidence>
<evidence type="ECO:0000269" key="4">
    <source>
    </source>
</evidence>
<evidence type="ECO:0000269" key="5">
    <source>
    </source>
</evidence>
<evidence type="ECO:0000305" key="6"/>
<evidence type="ECO:0000312" key="7">
    <source>
        <dbReference type="WormBase" id="F59C6.7a"/>
    </source>
</evidence>
<proteinExistence type="evidence at protein level"/>
<name>CHE13_CAEEL</name>
<comment type="function">
    <text evidence="3 5">Component of the intraflagellar transport (IFT) complex B required for transport of proteins in the motile cilium (PubMed:12651157, PubMed:28479320). May be required for ciliary entrance and transport of specific ciliary cargo proteins such as che-3 which are related to motility (PubMed:28479320). Required for the formation of chemosensory cilia that detect chemosensory cues (PubMed:12651157).</text>
</comment>
<comment type="subunit">
    <text evidence="5">Component of the IFT complex B composed of at least che-2, che-13, dyf-1, dyf-3, dyf-6, dyf-11, dyf-13, ift-20, ift-74, ift-81, ifta-2, osm-1, osm-5 and osm-6.</text>
</comment>
<comment type="subcellular location">
    <subcellularLocation>
        <location evidence="3">Cytoplasm</location>
        <location evidence="3">Cytoskeleton</location>
        <location evidence="3">Cilium axoneme</location>
    </subcellularLocation>
    <text>Moves along the axoneme.</text>
</comment>
<comment type="alternative products">
    <event type="alternative splicing"/>
    <isoform>
        <id>Q93833-1</id>
        <name>a</name>
        <sequence type="displayed"/>
    </isoform>
    <isoform>
        <id>Q93833-2</id>
        <name>b</name>
        <sequence type="described" ref="VSP_043944 VSP_043945"/>
    </isoform>
</comment>
<comment type="induction">
    <text evidence="3">Regulated by the RFX-type transcription factor daf-19.</text>
</comment>
<comment type="disruption phenotype">
    <text evidence="3 4">Worms display defects in ciliary structure resulting in defects in ability and osmotic avoidance behavior. It also affects the localization of IFT complex B proteins, osm-5 and osm-6. Shortened axonemes of all classes of sensory cilia in the head. Required for mating.</text>
</comment>
<comment type="similarity">
    <text evidence="6">Belongs to the IFT57 family.</text>
</comment>
<sequence>MEEEHEEESHLSQSDTVGSAIVEDGPGKEYEIYIKNEELVDKLKLLNYEDGFLKLGVVYKPILKHYFVKSKNVGEQFFLFTSLAAWLIKKSGDESYNMPQEFDDPNSTLANIMAAAKNKGIATDFTAAKLKSGAGENVIFILNSLADASLVHVGFQWQKMIPPKEEDEDTAVDEQDEDDDNDDIVEEPMNFLDDDDDDNVIEIDLKAQGLATESKNPLQSVLQSNTDAITWKQEVERVAPQLKITLKQDAKDWRLHLEQMNSMHKNVEQKVGNVGPYLDNMSKDIAKALERIASREKSLNSQLASMMSKFRRATDTRAELREKYKAASVGVSSRTETLDRISDDIEQLKQQIEEQGAKSSDGAPLVKIKQAVSKLEEELQTMNVQIGVFEQSILNTYLRDHFNFSANLLNIM</sequence>
<protein>
    <recommendedName>
        <fullName>Intraflagellar transport protein che-13</fullName>
    </recommendedName>
    <alternativeName>
        <fullName>Chemotaxis abnormal protein 13</fullName>
    </alternativeName>
</protein>
<keyword id="KW-0025">Alternative splicing</keyword>
<keyword id="KW-0966">Cell projection</keyword>
<keyword id="KW-0969">Cilium</keyword>
<keyword id="KW-0175">Coiled coil</keyword>
<keyword id="KW-0963">Cytoplasm</keyword>
<keyword id="KW-0206">Cytoskeleton</keyword>
<keyword id="KW-1185">Reference proteome</keyword>
<accession>Q93833</accession>
<accession>E9P884</accession>